<gene>
    <name evidence="1" type="primary">miaA</name>
    <name type="ordered locus">MAB_3044c</name>
</gene>
<feature type="chain" id="PRO_1000098671" description="tRNA dimethylallyltransferase">
    <location>
        <begin position="1"/>
        <end position="313"/>
    </location>
</feature>
<feature type="binding site" evidence="1">
    <location>
        <begin position="9"/>
        <end position="16"/>
    </location>
    <ligand>
        <name>ATP</name>
        <dbReference type="ChEBI" id="CHEBI:30616"/>
    </ligand>
</feature>
<feature type="binding site" evidence="1">
    <location>
        <begin position="11"/>
        <end position="16"/>
    </location>
    <ligand>
        <name>substrate</name>
    </ligand>
</feature>
<feature type="site" description="Interaction with substrate tRNA" evidence="1">
    <location>
        <position position="100"/>
    </location>
</feature>
<feature type="site" description="Interaction with substrate tRNA" evidence="1">
    <location>
        <position position="121"/>
    </location>
</feature>
<keyword id="KW-0067">ATP-binding</keyword>
<keyword id="KW-0460">Magnesium</keyword>
<keyword id="KW-0547">Nucleotide-binding</keyword>
<keyword id="KW-1185">Reference proteome</keyword>
<keyword id="KW-0808">Transferase</keyword>
<keyword id="KW-0819">tRNA processing</keyword>
<organism>
    <name type="scientific">Mycobacteroides abscessus (strain ATCC 19977 / DSM 44196 / CCUG 20993 / CIP 104536 / JCM 13569 / NCTC 13031 / TMC 1543 / L948)</name>
    <name type="common">Mycobacterium abscessus</name>
    <dbReference type="NCBI Taxonomy" id="561007"/>
    <lineage>
        <taxon>Bacteria</taxon>
        <taxon>Bacillati</taxon>
        <taxon>Actinomycetota</taxon>
        <taxon>Actinomycetes</taxon>
        <taxon>Mycobacteriales</taxon>
        <taxon>Mycobacteriaceae</taxon>
        <taxon>Mycobacteroides</taxon>
        <taxon>Mycobacteroides abscessus</taxon>
    </lineage>
</organism>
<name>MIAA_MYCA9</name>
<proteinExistence type="inferred from homology"/>
<comment type="function">
    <text evidence="1">Catalyzes the transfer of a dimethylallyl group onto the adenine at position 37 in tRNAs that read codons beginning with uridine, leading to the formation of N6-(dimethylallyl)adenosine (i(6)A).</text>
</comment>
<comment type="catalytic activity">
    <reaction evidence="1">
        <text>adenosine(37) in tRNA + dimethylallyl diphosphate = N(6)-dimethylallyladenosine(37) in tRNA + diphosphate</text>
        <dbReference type="Rhea" id="RHEA:26482"/>
        <dbReference type="Rhea" id="RHEA-COMP:10162"/>
        <dbReference type="Rhea" id="RHEA-COMP:10375"/>
        <dbReference type="ChEBI" id="CHEBI:33019"/>
        <dbReference type="ChEBI" id="CHEBI:57623"/>
        <dbReference type="ChEBI" id="CHEBI:74411"/>
        <dbReference type="ChEBI" id="CHEBI:74415"/>
        <dbReference type="EC" id="2.5.1.75"/>
    </reaction>
</comment>
<comment type="cofactor">
    <cofactor evidence="1">
        <name>Mg(2+)</name>
        <dbReference type="ChEBI" id="CHEBI:18420"/>
    </cofactor>
</comment>
<comment type="subunit">
    <text evidence="1">Monomer.</text>
</comment>
<comment type="similarity">
    <text evidence="1">Belongs to the IPP transferase family.</text>
</comment>
<reference key="1">
    <citation type="journal article" date="2009" name="PLoS ONE">
        <title>Non mycobacterial virulence genes in the genome of the emerging pathogen Mycobacterium abscessus.</title>
        <authorList>
            <person name="Ripoll F."/>
            <person name="Pasek S."/>
            <person name="Schenowitz C."/>
            <person name="Dossat C."/>
            <person name="Barbe V."/>
            <person name="Rottman M."/>
            <person name="Macheras E."/>
            <person name="Heym B."/>
            <person name="Herrmann J.L."/>
            <person name="Daffe M."/>
            <person name="Brosch R."/>
            <person name="Risler J.L."/>
            <person name="Gaillard J.L."/>
        </authorList>
    </citation>
    <scope>NUCLEOTIDE SEQUENCE [LARGE SCALE GENOMIC DNA]</scope>
    <source>
        <strain>ATCC 19977 / DSM 44196 / CCUG 20993 / CIP 104536 / JCM 13569 / NCTC 13031 / TMC 1543 / L948</strain>
    </source>
</reference>
<evidence type="ECO:0000255" key="1">
    <source>
        <dbReference type="HAMAP-Rule" id="MF_00185"/>
    </source>
</evidence>
<protein>
    <recommendedName>
        <fullName evidence="1">tRNA dimethylallyltransferase</fullName>
        <ecNumber evidence="1">2.5.1.75</ecNumber>
    </recommendedName>
    <alternativeName>
        <fullName evidence="1">Dimethylallyl diphosphate:tRNA dimethylallyltransferase</fullName>
        <shortName evidence="1">DMAPP:tRNA dimethylallyltransferase</shortName>
        <shortName evidence="1">DMATase</shortName>
    </alternativeName>
    <alternativeName>
        <fullName evidence="1">Isopentenyl-diphosphate:tRNA isopentenyltransferase</fullName>
        <shortName evidence="1">IPP transferase</shortName>
        <shortName evidence="1">IPPT</shortName>
        <shortName evidence="1">IPTase</shortName>
    </alternativeName>
</protein>
<dbReference type="EC" id="2.5.1.75" evidence="1"/>
<dbReference type="EMBL" id="CU458896">
    <property type="protein sequence ID" value="CAM63122.1"/>
    <property type="molecule type" value="Genomic_DNA"/>
</dbReference>
<dbReference type="RefSeq" id="WP_005093732.1">
    <property type="nucleotide sequence ID" value="NZ_MLCG01000003.1"/>
</dbReference>
<dbReference type="SMR" id="B1MD01"/>
<dbReference type="GeneID" id="93379977"/>
<dbReference type="KEGG" id="mab:MAB_3044c"/>
<dbReference type="Proteomes" id="UP000007137">
    <property type="component" value="Chromosome"/>
</dbReference>
<dbReference type="GO" id="GO:0005524">
    <property type="term" value="F:ATP binding"/>
    <property type="evidence" value="ECO:0007669"/>
    <property type="project" value="UniProtKB-UniRule"/>
</dbReference>
<dbReference type="GO" id="GO:0052381">
    <property type="term" value="F:tRNA dimethylallyltransferase activity"/>
    <property type="evidence" value="ECO:0007669"/>
    <property type="project" value="UniProtKB-UniRule"/>
</dbReference>
<dbReference type="GO" id="GO:0006400">
    <property type="term" value="P:tRNA modification"/>
    <property type="evidence" value="ECO:0007669"/>
    <property type="project" value="TreeGrafter"/>
</dbReference>
<dbReference type="FunFam" id="1.10.20.140:FF:000001">
    <property type="entry name" value="tRNA dimethylallyltransferase"/>
    <property type="match status" value="1"/>
</dbReference>
<dbReference type="Gene3D" id="1.10.20.140">
    <property type="match status" value="1"/>
</dbReference>
<dbReference type="Gene3D" id="3.40.50.300">
    <property type="entry name" value="P-loop containing nucleotide triphosphate hydrolases"/>
    <property type="match status" value="1"/>
</dbReference>
<dbReference type="HAMAP" id="MF_00185">
    <property type="entry name" value="IPP_trans"/>
    <property type="match status" value="1"/>
</dbReference>
<dbReference type="InterPro" id="IPR039657">
    <property type="entry name" value="Dimethylallyltransferase"/>
</dbReference>
<dbReference type="InterPro" id="IPR018022">
    <property type="entry name" value="IPT"/>
</dbReference>
<dbReference type="InterPro" id="IPR027417">
    <property type="entry name" value="P-loop_NTPase"/>
</dbReference>
<dbReference type="NCBIfam" id="TIGR00174">
    <property type="entry name" value="miaA"/>
    <property type="match status" value="1"/>
</dbReference>
<dbReference type="PANTHER" id="PTHR11088">
    <property type="entry name" value="TRNA DIMETHYLALLYLTRANSFERASE"/>
    <property type="match status" value="1"/>
</dbReference>
<dbReference type="PANTHER" id="PTHR11088:SF60">
    <property type="entry name" value="TRNA DIMETHYLALLYLTRANSFERASE"/>
    <property type="match status" value="1"/>
</dbReference>
<dbReference type="Pfam" id="PF01715">
    <property type="entry name" value="IPPT"/>
    <property type="match status" value="1"/>
</dbReference>
<dbReference type="SUPFAM" id="SSF52540">
    <property type="entry name" value="P-loop containing nucleoside triphosphate hydrolases"/>
    <property type="match status" value="1"/>
</dbReference>
<sequence length="313" mass="33921">MTRPIAVIGPTATGKSALALELAERLGGEIVNADAMQLYRGMDIGTAKVPECERRGLVHHMLDVLDVTETATVATYQERAVATIDDIRARGHVPVIVGGSMMYIQALLDDWAFPATDPQVRARWEERLAQIGVTALHAELAARDPAAAAIILPTDGRRTVRALEVIELTGQPFAASAPTIGPPRWDTLIVGLDWETEKLDDRIARRTDLMFEQGFVGEVEYLLSTGLRDGVTASRAIGYAQVIAALDAGGGAGALAQARDLTFVGTRRYVRRQRSWFGRDHRVVWLAGESVETGGPEGLAGEIVSRWRLSSNT</sequence>
<accession>B1MD01</accession>